<comment type="function">
    <molecule>Neurosecretory protein VGF</molecule>
    <text evidence="2 5 9 10">Secreted polyprotein that is packaged and proteolytically processed by prohormone convertases PCSK1 and PCSK2 in a cell-type-specific manner (By similarity). VGF and peptides derived from its processing play many roles in neurogenesis and neuroplasticity associated with learning, memory, depression and chronic pain (PubMed:19863797, PubMed:26180209, PubMed:30504797).</text>
</comment>
<comment type="function">
    <molecule>Neuroendocrine regulatory peptide-1</molecule>
    <text evidence="2">Plays a role in the control of body fluid homeostasis by regulating vasopressin release. Suppresses presynaptic glutamatergic neurons connected to vasopressin neurons.</text>
</comment>
<comment type="function">
    <molecule>Neuroendocrine regulatory peptide-1</molecule>
    <text evidence="2">Plays a role in the control of body fluid homeostasis by regulating vasopressin release. Activates GABAergic interneurons which are inhibitory neurons of the nervous system and thereby suppresses presynaptic glutamatergic neurons (By similarity). Also stimulates feeding behavior in an orexin-dependent manner in the hypothalamus (By similarity). Functions as a positive regulator for the activation of orexin neurons resulting in elevated gastric acid secretion and gastric emptying (By similarity).</text>
</comment>
<comment type="function">
    <molecule>VGF-derived peptide TLQP-21</molecule>
    <text evidence="2 6 7">Secreted multifunctional peptide that interacts with different receptors and thereby plays multiple physiological roles including modulation of energy expenditure, pain, response to stress, gastric regulation as well as lipolysis (PubMed:22289198, PubMed:25456411). Activates the G-protein-coupled receptor C3AR1 via a folding-upon-binding mechanism leading to enhanced lipolysis in adipocytes (PubMed:25456411). Interacts with gC1qR receptor in macrophages and microglia causing increased levels of intracellular calcium and hypersensitivity (By similarity).</text>
</comment>
<comment type="function">
    <molecule>VGF-derived peptide TLQP-62</molecule>
    <text evidence="8 9 10">Plays a role in the regulation of memory formation and depression-related behaviors potentially by influencing synaptic plasticity and neurogenesis. Induces acute and transient activation of the NTRK2/TRKB receptor and subsequent CREB phosphorylation (PubMed:26180209, PubMed:30504797). Also induces insulin secretion in insulinoma cells by increasing intracellular calcium mobilization (PubMed:25917832).</text>
</comment>
<comment type="subunit">
    <molecule>VGF-derived peptide TLQP-21</molecule>
    <text evidence="1 2 7">Interacts with HSPA8 on cell membrane (By similarity). Interacts with C3AR1 (PubMed:25456411). Interacts with C1QBP (By similarity).</text>
</comment>
<comment type="subcellular location">
    <molecule>Neurosecretory protein VGF</molecule>
    <subcellularLocation>
        <location evidence="1">Secreted</location>
    </subcellularLocation>
    <subcellularLocation>
        <location evidence="1">Cytoplasmic vesicle</location>
        <location evidence="1">Secretory vesicle</location>
    </subcellularLocation>
    <text evidence="1">Stored in secretory vesicles and then secreted, NERP peptides colocalize with vasopressin in the storage granules of hypothalamus.</text>
</comment>
<comment type="disruption phenotype">
    <text evidence="5">VGF-deficiency produces a lean, hypermetabolic mouse that is resistant to diet and genetically-induced obesity.</text>
</comment>
<evidence type="ECO:0000250" key="1">
    <source>
        <dbReference type="UniProtKB" id="O15240"/>
    </source>
</evidence>
<evidence type="ECO:0000250" key="2">
    <source>
        <dbReference type="UniProtKB" id="P20156"/>
    </source>
</evidence>
<evidence type="ECO:0000255" key="3"/>
<evidence type="ECO:0000256" key="4">
    <source>
        <dbReference type="SAM" id="MobiDB-lite"/>
    </source>
</evidence>
<evidence type="ECO:0000269" key="5">
    <source>
    </source>
</evidence>
<evidence type="ECO:0000269" key="6">
    <source>
    </source>
</evidence>
<evidence type="ECO:0000269" key="7">
    <source>
    </source>
</evidence>
<evidence type="ECO:0000269" key="8">
    <source>
    </source>
</evidence>
<evidence type="ECO:0000269" key="9">
    <source>
    </source>
</evidence>
<evidence type="ECO:0000269" key="10">
    <source>
    </source>
</evidence>
<evidence type="ECO:0000312" key="11">
    <source>
        <dbReference type="MGI" id="MGI:1343180"/>
    </source>
</evidence>
<gene>
    <name evidence="11" type="primary">Vgf</name>
</gene>
<dbReference type="EMBL" id="AC147986">
    <property type="status" value="NOT_ANNOTATED_CDS"/>
    <property type="molecule type" value="Genomic_DNA"/>
</dbReference>
<dbReference type="EMBL" id="CH466529">
    <property type="protein sequence ID" value="EDL19290.1"/>
    <property type="molecule type" value="Genomic_DNA"/>
</dbReference>
<dbReference type="EMBL" id="BC085134">
    <property type="protein sequence ID" value="AAH85134.1"/>
    <property type="molecule type" value="mRNA"/>
</dbReference>
<dbReference type="EMBL" id="BC138553">
    <property type="protein sequence ID" value="AAI38554.1"/>
    <property type="molecule type" value="mRNA"/>
</dbReference>
<dbReference type="EMBL" id="BC138554">
    <property type="protein sequence ID" value="AAI38555.1"/>
    <property type="molecule type" value="mRNA"/>
</dbReference>
<dbReference type="CCDS" id="CCDS19760.1"/>
<dbReference type="RefSeq" id="NP_001034474.1">
    <property type="nucleotide sequence ID" value="NM_001039385.1"/>
</dbReference>
<dbReference type="RefSeq" id="XP_006504497.1">
    <property type="nucleotide sequence ID" value="XM_006504434.3"/>
</dbReference>
<dbReference type="RefSeq" id="XP_006504498.1">
    <property type="nucleotide sequence ID" value="XM_006504435.3"/>
</dbReference>
<dbReference type="RefSeq" id="XP_006504499.1">
    <property type="nucleotide sequence ID" value="XM_006504436.3"/>
</dbReference>
<dbReference type="RefSeq" id="XP_006504500.1">
    <property type="nucleotide sequence ID" value="XM_006504437.2"/>
</dbReference>
<dbReference type="RefSeq" id="XP_006504501.1">
    <property type="nucleotide sequence ID" value="XM_006504438.3"/>
</dbReference>
<dbReference type="RefSeq" id="XP_006504502.1">
    <property type="nucleotide sequence ID" value="XM_006504439.2"/>
</dbReference>
<dbReference type="RefSeq" id="XP_006504503.1">
    <property type="nucleotide sequence ID" value="XM_006504440.1"/>
</dbReference>
<dbReference type="RefSeq" id="XP_017176427.1">
    <property type="nucleotide sequence ID" value="XM_017320938.2"/>
</dbReference>
<dbReference type="RefSeq" id="XP_017176428.1">
    <property type="nucleotide sequence ID" value="XM_017320939.2"/>
</dbReference>
<dbReference type="RefSeq" id="XP_030110478.1">
    <property type="nucleotide sequence ID" value="XM_030254618.1"/>
</dbReference>
<dbReference type="RefSeq" id="XP_030110481.1">
    <property type="nucleotide sequence ID" value="XM_030254621.2"/>
</dbReference>
<dbReference type="RefSeq" id="XP_030110482.1">
    <property type="nucleotide sequence ID" value="XM_030254622.1"/>
</dbReference>
<dbReference type="RefSeq" id="XP_030110484.1">
    <property type="nucleotide sequence ID" value="XM_030254624.2"/>
</dbReference>
<dbReference type="RefSeq" id="XP_036021134.1">
    <property type="nucleotide sequence ID" value="XM_036165241.1"/>
</dbReference>
<dbReference type="SMR" id="Q0VGU4"/>
<dbReference type="FunCoup" id="Q0VGU4">
    <property type="interactions" value="500"/>
</dbReference>
<dbReference type="IntAct" id="Q0VGU4">
    <property type="interactions" value="2"/>
</dbReference>
<dbReference type="STRING" id="10090.ENSMUSP00000140815"/>
<dbReference type="GlyGen" id="Q0VGU4">
    <property type="glycosylation" value="1 site, 1 O-linked glycan (1 site)"/>
</dbReference>
<dbReference type="iPTMnet" id="Q0VGU4"/>
<dbReference type="PhosphoSitePlus" id="Q0VGU4"/>
<dbReference type="PaxDb" id="10090-ENSMUSP00000140815"/>
<dbReference type="PeptideAtlas" id="Q0VGU4"/>
<dbReference type="ProteomicsDB" id="338956"/>
<dbReference type="Antibodypedia" id="30974">
    <property type="antibodies" value="349 antibodies from 35 providers"/>
</dbReference>
<dbReference type="Ensembl" id="ENSMUST00000041543.9">
    <property type="protein sequence ID" value="ENSMUSP00000048273.9"/>
    <property type="gene ID" value="ENSMUSG00000037428.15"/>
</dbReference>
<dbReference type="Ensembl" id="ENSMUST00000186451.2">
    <property type="protein sequence ID" value="ENSMUSP00000140735.2"/>
    <property type="gene ID" value="ENSMUSG00000037428.15"/>
</dbReference>
<dbReference type="Ensembl" id="ENSMUST00000190827.7">
    <property type="protein sequence ID" value="ENSMUSP00000140815.2"/>
    <property type="gene ID" value="ENSMUSG00000037428.15"/>
</dbReference>
<dbReference type="GeneID" id="381677"/>
<dbReference type="KEGG" id="mmu:381677"/>
<dbReference type="UCSC" id="uc009abl.1">
    <property type="organism name" value="mouse"/>
</dbReference>
<dbReference type="AGR" id="MGI:1343180"/>
<dbReference type="CTD" id="7425"/>
<dbReference type="MGI" id="MGI:1343180">
    <property type="gene designation" value="Vgf"/>
</dbReference>
<dbReference type="VEuPathDB" id="HostDB:ENSMUSG00000037428"/>
<dbReference type="eggNOG" id="ENOG502S5N4">
    <property type="taxonomic scope" value="Eukaryota"/>
</dbReference>
<dbReference type="GeneTree" id="ENSGT00390000017745"/>
<dbReference type="HOGENOM" id="CLU_030654_0_0_1"/>
<dbReference type="InParanoid" id="Q0VGU4"/>
<dbReference type="OMA" id="EMPGHRR"/>
<dbReference type="OrthoDB" id="8926660at2759"/>
<dbReference type="PhylomeDB" id="Q0VGU4"/>
<dbReference type="TreeFam" id="TF338498"/>
<dbReference type="Reactome" id="R-MMU-381426">
    <property type="pathway name" value="Regulation of Insulin-like Growth Factor (IGF) transport and uptake by Insulin-like Growth Factor Binding Proteins (IGFBPs)"/>
</dbReference>
<dbReference type="Reactome" id="R-MMU-8957275">
    <property type="pathway name" value="Post-translational protein phosphorylation"/>
</dbReference>
<dbReference type="BioGRID-ORCS" id="381677">
    <property type="hits" value="4 hits in 80 CRISPR screens"/>
</dbReference>
<dbReference type="PRO" id="PR:Q0VGU4"/>
<dbReference type="Proteomes" id="UP000000589">
    <property type="component" value="Chromosome 5"/>
</dbReference>
<dbReference type="RNAct" id="Q0VGU4">
    <property type="molecule type" value="protein"/>
</dbReference>
<dbReference type="Bgee" id="ENSMUSG00000037428">
    <property type="expression patterns" value="Expressed in suprachiasmatic nucleus and 75 other cell types or tissues"/>
</dbReference>
<dbReference type="ExpressionAtlas" id="Q0VGU4">
    <property type="expression patterns" value="baseline and differential"/>
</dbReference>
<dbReference type="GO" id="GO:0005576">
    <property type="term" value="C:extracellular region"/>
    <property type="evidence" value="ECO:0000304"/>
    <property type="project" value="MGI"/>
</dbReference>
<dbReference type="GO" id="GO:0005615">
    <property type="term" value="C:extracellular space"/>
    <property type="evidence" value="ECO:0007669"/>
    <property type="project" value="Ensembl"/>
</dbReference>
<dbReference type="GO" id="GO:0005794">
    <property type="term" value="C:Golgi apparatus"/>
    <property type="evidence" value="ECO:0007669"/>
    <property type="project" value="Ensembl"/>
</dbReference>
<dbReference type="GO" id="GO:0030133">
    <property type="term" value="C:transport vesicle"/>
    <property type="evidence" value="ECO:0007669"/>
    <property type="project" value="UniProtKB-SubCell"/>
</dbReference>
<dbReference type="GO" id="GO:0008083">
    <property type="term" value="F:growth factor activity"/>
    <property type="evidence" value="ECO:0007669"/>
    <property type="project" value="UniProtKB-KW"/>
</dbReference>
<dbReference type="GO" id="GO:0005184">
    <property type="term" value="F:neuropeptide hormone activity"/>
    <property type="evidence" value="ECO:0000315"/>
    <property type="project" value="MGI"/>
</dbReference>
<dbReference type="GO" id="GO:0042742">
    <property type="term" value="P:defense response to bacterium"/>
    <property type="evidence" value="ECO:0007669"/>
    <property type="project" value="UniProtKB-KW"/>
</dbReference>
<dbReference type="GO" id="GO:0006091">
    <property type="term" value="P:generation of precursor metabolites and energy"/>
    <property type="evidence" value="ECO:0000315"/>
    <property type="project" value="MGI"/>
</dbReference>
<dbReference type="GO" id="GO:0042593">
    <property type="term" value="P:glucose homeostasis"/>
    <property type="evidence" value="ECO:0000315"/>
    <property type="project" value="MGI"/>
</dbReference>
<dbReference type="GO" id="GO:0030073">
    <property type="term" value="P:insulin secretion"/>
    <property type="evidence" value="ECO:0000316"/>
    <property type="project" value="MGI"/>
</dbReference>
<dbReference type="GO" id="GO:0001541">
    <property type="term" value="P:ovarian follicle development"/>
    <property type="evidence" value="ECO:0000315"/>
    <property type="project" value="MGI"/>
</dbReference>
<dbReference type="GO" id="GO:0051591">
    <property type="term" value="P:response to cAMP"/>
    <property type="evidence" value="ECO:0007669"/>
    <property type="project" value="Ensembl"/>
</dbReference>
<dbReference type="GO" id="GO:0009409">
    <property type="term" value="P:response to cold"/>
    <property type="evidence" value="ECO:0000314"/>
    <property type="project" value="MGI"/>
</dbReference>
<dbReference type="GO" id="GO:0002021">
    <property type="term" value="P:response to dietary excess"/>
    <property type="evidence" value="ECO:0000314"/>
    <property type="project" value="MGI"/>
</dbReference>
<dbReference type="GO" id="GO:0032868">
    <property type="term" value="P:response to insulin"/>
    <property type="evidence" value="ECO:0000315"/>
    <property type="project" value="MGI"/>
</dbReference>
<dbReference type="GO" id="GO:0019953">
    <property type="term" value="P:sexual reproduction"/>
    <property type="evidence" value="ECO:0000315"/>
    <property type="project" value="MGI"/>
</dbReference>
<dbReference type="InterPro" id="IPR026128">
    <property type="entry name" value="VGF"/>
</dbReference>
<dbReference type="PANTHER" id="PTHR15159">
    <property type="entry name" value="NEUROSECRETORY PROTEIN VGF"/>
    <property type="match status" value="1"/>
</dbReference>
<dbReference type="PANTHER" id="PTHR15159:SF2">
    <property type="entry name" value="NEUROSECRETORY PROTEIN VGF"/>
    <property type="match status" value="1"/>
</dbReference>
<sequence>MKTFTLPASVLFCFLLLIQGLGAAPPGRPDVFPPPLSSEHNGQVAEDAVSRPKDDGVPEVRAARNPEPQDQGELFQGVDPRALASVLLQALDRPASPPSVPGGSQQGTPEEAAEALLTESVRSQTHSLPAPEIQAPAVAPPRPQTQDRDPEEDDRSEELEALASLLQELRDFSPSNAKRQQETAAAETETRTHTLTRVNLESPGPERVWRASWGEFQARVPERAPLPPPVPSQFQARMSESAPLPETHQFGEGVSSPKTHLGETLTPLSKAYQSLGGPFPKVRRLEGSFLGGSEAGERLLQQGLAQVEAGRRQAEATRQAAAQEERLADLASDLLLQYLLQGGARQRDLGGRELQETQQERENEREEEAEQERRGGGEDDVGEEDEEAAEAEAEAEEAERARQNALLFAEEEDGEAGAEDKRSQEEAPGHRRKDAEGAEEGGEEDDDDEEMDPQTIDSLIELSTKLHLPADDVVSIIEEVEEKRKRKKNAPPEPVPPPRAAPAPTHVRSPQPPPPAPARDELPDWNEVLPPWDREEDEVFPPGPYHPFPNYIRPRTLQPPASSRRRHFHHALPPARHHPDLEAQARRAQEEADAEERRLQEQEELENYIEHVLLHRP</sequence>
<keyword id="KW-0027">Amidation</keyword>
<keyword id="KW-0044">Antibiotic</keyword>
<keyword id="KW-0929">Antimicrobial</keyword>
<keyword id="KW-0165">Cleavage on pair of basic residues</keyword>
<keyword id="KW-0175">Coiled coil</keyword>
<keyword id="KW-0968">Cytoplasmic vesicle</keyword>
<keyword id="KW-0339">Growth factor</keyword>
<keyword id="KW-0597">Phosphoprotein</keyword>
<keyword id="KW-0873">Pyrrolidone carboxylic acid</keyword>
<keyword id="KW-1185">Reference proteome</keyword>
<keyword id="KW-0964">Secreted</keyword>
<keyword id="KW-0732">Signal</keyword>
<organism>
    <name type="scientific">Mus musculus</name>
    <name type="common">Mouse</name>
    <dbReference type="NCBI Taxonomy" id="10090"/>
    <lineage>
        <taxon>Eukaryota</taxon>
        <taxon>Metazoa</taxon>
        <taxon>Chordata</taxon>
        <taxon>Craniata</taxon>
        <taxon>Vertebrata</taxon>
        <taxon>Euteleostomi</taxon>
        <taxon>Mammalia</taxon>
        <taxon>Eutheria</taxon>
        <taxon>Euarchontoglires</taxon>
        <taxon>Glires</taxon>
        <taxon>Rodentia</taxon>
        <taxon>Myomorpha</taxon>
        <taxon>Muroidea</taxon>
        <taxon>Muridae</taxon>
        <taxon>Murinae</taxon>
        <taxon>Mus</taxon>
        <taxon>Mus</taxon>
    </lineage>
</organism>
<feature type="signal peptide" evidence="3">
    <location>
        <begin position="1"/>
        <end position="23"/>
    </location>
</feature>
<feature type="chain" id="PRO_5015097006" description="Neurosecretory protein VGF" evidence="3">
    <location>
        <begin position="24"/>
        <end position="617"/>
    </location>
</feature>
<feature type="peptide" id="PRO_0000446628" description="Neuroendocrine regulatory peptide-1" evidence="2">
    <location>
        <begin position="284"/>
        <end position="309"/>
    </location>
</feature>
<feature type="peptide" id="PRO_0000446629" description="Neuroendocrine regulatory peptide-2" evidence="2">
    <location>
        <begin position="313"/>
        <end position="350"/>
    </location>
</feature>
<feature type="peptide" id="PRO_0000446630" description="VGF-derived peptide TLQP-62" evidence="8">
    <location>
        <begin position="556"/>
        <end position="617"/>
    </location>
</feature>
<feature type="peptide" id="PRO_0000446631" description="VGF-derived peptide TLQP-21" evidence="6">
    <location>
        <begin position="556"/>
        <end position="576"/>
    </location>
</feature>
<feature type="region of interest" description="Disordered" evidence="4">
    <location>
        <begin position="29"/>
        <end position="75"/>
    </location>
</feature>
<feature type="region of interest" description="Disordered" evidence="4">
    <location>
        <begin position="93"/>
        <end position="204"/>
    </location>
</feature>
<feature type="region of interest" description="Disordered" evidence="4">
    <location>
        <begin position="239"/>
        <end position="262"/>
    </location>
</feature>
<feature type="region of interest" description="Disordered" evidence="4">
    <location>
        <begin position="345"/>
        <end position="599"/>
    </location>
</feature>
<feature type="compositionally biased region" description="Basic and acidic residues" evidence="4">
    <location>
        <begin position="48"/>
        <end position="64"/>
    </location>
</feature>
<feature type="compositionally biased region" description="Acidic residues" evidence="4">
    <location>
        <begin position="149"/>
        <end position="160"/>
    </location>
</feature>
<feature type="compositionally biased region" description="Low complexity" evidence="4">
    <location>
        <begin position="182"/>
        <end position="197"/>
    </location>
</feature>
<feature type="compositionally biased region" description="Basic and acidic residues" evidence="4">
    <location>
        <begin position="345"/>
        <end position="364"/>
    </location>
</feature>
<feature type="compositionally biased region" description="Acidic residues" evidence="4">
    <location>
        <begin position="378"/>
        <end position="397"/>
    </location>
</feature>
<feature type="compositionally biased region" description="Basic and acidic residues" evidence="4">
    <location>
        <begin position="418"/>
        <end position="436"/>
    </location>
</feature>
<feature type="compositionally biased region" description="Acidic residues" evidence="4">
    <location>
        <begin position="437"/>
        <end position="452"/>
    </location>
</feature>
<feature type="compositionally biased region" description="Pro residues" evidence="4">
    <location>
        <begin position="491"/>
        <end position="501"/>
    </location>
</feature>
<feature type="compositionally biased region" description="Basic and acidic residues" evidence="4">
    <location>
        <begin position="577"/>
        <end position="599"/>
    </location>
</feature>
<feature type="modified residue" description="Pyrrolidone carboxylic acid" evidence="1">
    <location>
        <position position="313"/>
    </location>
</feature>
<feature type="modified residue" description="Phosphoserine" evidence="1">
    <location>
        <position position="423"/>
    </location>
</feature>
<feature type="mutagenesis site" description="Complete loss of lipolytic function." evidence="7">
    <original>R</original>
    <variation>A</variation>
    <location>
        <position position="576"/>
    </location>
</feature>
<accession>Q0VGU4</accession>
<reference key="1">
    <citation type="journal article" date="2009" name="PLoS Biol.">
        <title>Lineage-specific biology revealed by a finished genome assembly of the mouse.</title>
        <authorList>
            <person name="Church D.M."/>
            <person name="Goodstadt L."/>
            <person name="Hillier L.W."/>
            <person name="Zody M.C."/>
            <person name="Goldstein S."/>
            <person name="She X."/>
            <person name="Bult C.J."/>
            <person name="Agarwala R."/>
            <person name="Cherry J.L."/>
            <person name="DiCuccio M."/>
            <person name="Hlavina W."/>
            <person name="Kapustin Y."/>
            <person name="Meric P."/>
            <person name="Maglott D."/>
            <person name="Birtle Z."/>
            <person name="Marques A.C."/>
            <person name="Graves T."/>
            <person name="Zhou S."/>
            <person name="Teague B."/>
            <person name="Potamousis K."/>
            <person name="Churas C."/>
            <person name="Place M."/>
            <person name="Herschleb J."/>
            <person name="Runnheim R."/>
            <person name="Forrest D."/>
            <person name="Amos-Landgraf J."/>
            <person name="Schwartz D.C."/>
            <person name="Cheng Z."/>
            <person name="Lindblad-Toh K."/>
            <person name="Eichler E.E."/>
            <person name="Ponting C.P."/>
        </authorList>
    </citation>
    <scope>NUCLEOTIDE SEQUENCE [LARGE SCALE GENOMIC DNA]</scope>
    <source>
        <strain>C57BL/6J</strain>
    </source>
</reference>
<reference key="2">
    <citation type="submission" date="2005-09" db="EMBL/GenBank/DDBJ databases">
        <authorList>
            <person name="Mural R.J."/>
            <person name="Adams M.D."/>
            <person name="Myers E.W."/>
            <person name="Smith H.O."/>
            <person name="Venter J.C."/>
        </authorList>
    </citation>
    <scope>NUCLEOTIDE SEQUENCE [LARGE SCALE GENOMIC DNA]</scope>
</reference>
<reference key="3">
    <citation type="journal article" date="2004" name="Genome Res.">
        <title>The status, quality, and expansion of the NIH full-length cDNA project: the Mammalian Gene Collection (MGC).</title>
        <authorList>
            <consortium name="The MGC Project Team"/>
        </authorList>
    </citation>
    <scope>NUCLEOTIDE SEQUENCE [LARGE SCALE MRNA]</scope>
    <source>
        <strain>C57BL/6J</strain>
        <tissue>Brain</tissue>
    </source>
</reference>
<reference key="4">
    <citation type="journal article" date="2009" name="BMC Physiol.">
        <title>Analysis of knockout mice suggests a role for VGF in the control of fat storage and energy expenditure.</title>
        <authorList>
            <person name="Watson E."/>
            <person name="Fargali S."/>
            <person name="Okamoto H."/>
            <person name="Sadahiro M."/>
            <person name="Gordon R.E."/>
            <person name="Chakraborty T."/>
            <person name="Sleeman M.W."/>
            <person name="Salton S.R."/>
        </authorList>
    </citation>
    <scope>DISRUPTION PHENOTYPE</scope>
    <scope>FUNCTION (NEUROSECRETORY PROTEIN VGF)</scope>
</reference>
<reference key="5">
    <citation type="journal article" date="2010" name="Cell">
        <title>A tissue-specific atlas of mouse protein phosphorylation and expression.</title>
        <authorList>
            <person name="Huttlin E.L."/>
            <person name="Jedrychowski M.P."/>
            <person name="Elias J.E."/>
            <person name="Goswami T."/>
            <person name="Rad R."/>
            <person name="Beausoleil S.A."/>
            <person name="Villen J."/>
            <person name="Haas W."/>
            <person name="Sowa M.E."/>
            <person name="Gygi S.P."/>
        </authorList>
    </citation>
    <scope>IDENTIFICATION BY MASS SPECTROMETRY [LARGE SCALE ANALYSIS]</scope>
</reference>
<reference key="6">
    <citation type="journal article" date="2012" name="Behav. Brain Res.">
        <title>Implication of the VGF-derived peptide TLQP-21 in mouse acute and chronic stress responses.</title>
        <authorList>
            <person name="Razzoli M."/>
            <person name="Bo E."/>
            <person name="Pascucci T."/>
            <person name="Pavone F."/>
            <person name="D'Amato F.R."/>
            <person name="Cero C."/>
            <person name="Sanghez V."/>
            <person name="Dadomo H."/>
            <person name="Palanza P."/>
            <person name="Parmigiani S."/>
            <person name="Ceresini G."/>
            <person name="Puglisi-Allegra S."/>
            <person name="Porta M."/>
            <person name="Panzica G.C."/>
            <person name="Moles A."/>
            <person name="Possenti R."/>
            <person name="Bartolomucci A."/>
        </authorList>
    </citation>
    <scope>FUNCTION (VGF-DERIVED PEPTIDE TLQP-21)</scope>
    <scope>TISSUE SPECIFICITY (VGF-DERIVED PEPTIDE TLQP-21)</scope>
</reference>
<reference key="7">
    <citation type="journal article" date="2014" name="Structure">
        <title>The TLQP-21 peptide activates the G-protein-coupled receptor C3aR1 via a folding-upon-binding mechanism.</title>
        <authorList>
            <person name="Cero C."/>
            <person name="Vostrikov V.V."/>
            <person name="Verardi R."/>
            <person name="Severini C."/>
            <person name="Gopinath T."/>
            <person name="Braun P.D."/>
            <person name="Sassano M.F."/>
            <person name="Gurney A."/>
            <person name="Roth B.L."/>
            <person name="Vulchanova L."/>
            <person name="Possenti R."/>
            <person name="Veglia G."/>
            <person name="Bartolomucci A."/>
        </authorList>
    </citation>
    <scope>FUNCTION (VGF-DERIVED PEPTIDE TLQP-21)</scope>
    <scope>INTERACTION WITH C3AR1 (VGF-DERIVED PEPTIDE TLQP-21)</scope>
    <scope>MUTAGENESIS OF ARG-576</scope>
</reference>
<reference key="8">
    <citation type="journal article" date="2015" name="J. Mol. Endocrinol.">
        <title>The VGF-derived peptide TLQP-62 modulates insulin secretion and glucose homeostasis.</title>
        <authorList>
            <person name="Petrocchi-Passeri P."/>
            <person name="Cero C."/>
            <person name="Cutarelli A."/>
            <person name="Frank C."/>
            <person name="Severini C."/>
            <person name="Bartolomucci A."/>
            <person name="Possenti R."/>
        </authorList>
    </citation>
    <scope>FUNCTION (VGF-DERIVED PEPTIDE TLQP-62)</scope>
</reference>
<reference key="9">
    <citation type="journal article" date="2015" name="J. Neurosci.">
        <title>VGF and Its C-Terminal Peptide TLQP-62 Regulate Memory Formation in Hippocampus via a BDNF-TrkB-Dependent Mechanism.</title>
        <authorList>
            <person name="Lin W.J."/>
            <person name="Jiang C."/>
            <person name="Sadahiro M."/>
            <person name="Bozdagi O."/>
            <person name="Vulchanova L."/>
            <person name="Alberini C.M."/>
            <person name="Salton S.R."/>
        </authorList>
    </citation>
    <scope>FUNCTION (VGF-DERIVED PEPTIDE TLQP-62)</scope>
    <scope>FUNCTION (NEUROSECRETORY PROTEIN VGF)</scope>
</reference>
<reference key="10">
    <citation type="journal article" date="2019" name="Neuropsychopharmacology">
        <title>VGF and its C-terminal peptide TLQP-62 in ventromedial prefrontal cortex regulate depression-related behaviors and the response to ketamine.</title>
        <authorList>
            <person name="Jiang C."/>
            <person name="Lin W.J."/>
            <person name="Labonte B."/>
            <person name="Tamminga C.A."/>
            <person name="Turecki G."/>
            <person name="Nestler E.J."/>
            <person name="Russo S.J."/>
            <person name="Salton S.R."/>
        </authorList>
    </citation>
    <scope>FUNCTION (VGF-DERIVED PEPTIDE TLQP-62)</scope>
    <scope>FUNCTION (NEUROSECRETORY PROTEIN VGF)</scope>
</reference>
<protein>
    <recommendedName>
        <fullName>Neurosecretory protein VGF</fullName>
    </recommendedName>
    <component>
        <recommendedName>
            <fullName>Neuroendocrine regulatory peptide-1</fullName>
            <shortName>NERP-1</shortName>
        </recommendedName>
    </component>
    <component>
        <recommendedName>
            <fullName>Neuroendocrine regulatory peptide-2</fullName>
            <shortName>NERP-2</shortName>
        </recommendedName>
    </component>
    <component>
        <recommendedName>
            <fullName>VGF-derived peptide TLQP-21</fullName>
        </recommendedName>
    </component>
    <component>
        <recommendedName>
            <fullName>VGF-derived peptide TLQP-62</fullName>
        </recommendedName>
    </component>
</protein>
<proteinExistence type="evidence at protein level"/>
<name>VGF_MOUSE</name>